<comment type="function">
    <text evidence="1">Component of the Mediator complex, a coactivator involved in the regulated transcription of nearly all RNA polymerase II-dependent genes. Mediator functions as a bridge to convey information from gene-specific regulatory proteins to the basal RNA polymerase II transcription machinery. Mediator is recruited to promoters by direct interactions with regulatory proteins and serves as a scaffold for the assembly of a functional preinitiation complex with RNA polymerase II and the general transcription factors. May play a role as a target recruitment subunit in E3 ubiquitin-protein ligase complexes and thus in ubiquitination and subsequent proteasomal degradation of target proteins (By similarity).</text>
</comment>
<comment type="pathway">
    <text>Protein modification; protein ubiquitination.</text>
</comment>
<comment type="subunit">
    <text evidence="1">Component of the Mediator complex. May be part of a multisubunit E3 ubiquitin-protein ligase complex (By similarity).</text>
</comment>
<comment type="subcellular location">
    <subcellularLocation>
        <location evidence="4">Nucleus</location>
    </subcellularLocation>
</comment>
<comment type="similarity">
    <text evidence="4">Belongs to the Mediator complex subunit 8 family.</text>
</comment>
<evidence type="ECO:0000250" key="1"/>
<evidence type="ECO:0000255" key="2"/>
<evidence type="ECO:0000256" key="3">
    <source>
        <dbReference type="SAM" id="MobiDB-lite"/>
    </source>
</evidence>
<evidence type="ECO:0000305" key="4"/>
<feature type="chain" id="PRO_0000304526" description="Mediator of RNA polymerase II transcription subunit 8-A">
    <location>
        <begin position="1"/>
        <end position="268"/>
    </location>
</feature>
<feature type="region of interest" description="Disordered" evidence="3">
    <location>
        <begin position="190"/>
        <end position="268"/>
    </location>
</feature>
<feature type="coiled-coil region" evidence="2">
    <location>
        <begin position="1"/>
        <end position="26"/>
    </location>
</feature>
<feature type="coiled-coil region" evidence="2">
    <location>
        <begin position="117"/>
        <end position="160"/>
    </location>
</feature>
<feature type="compositionally biased region" description="Polar residues" evidence="3">
    <location>
        <begin position="223"/>
        <end position="246"/>
    </location>
</feature>
<keyword id="KW-0010">Activator</keyword>
<keyword id="KW-0175">Coiled coil</keyword>
<keyword id="KW-0539">Nucleus</keyword>
<keyword id="KW-1185">Reference proteome</keyword>
<keyword id="KW-0804">Transcription</keyword>
<keyword id="KW-0805">Transcription regulation</keyword>
<keyword id="KW-0833">Ubl conjugation pathway</keyword>
<proteinExistence type="evidence at transcript level"/>
<dbReference type="EMBL" id="BC088827">
    <property type="protein sequence ID" value="AAH88827.1"/>
    <property type="molecule type" value="mRNA"/>
</dbReference>
<dbReference type="RefSeq" id="NP_001088933.1">
    <property type="nucleotide sequence ID" value="NM_001095464.1"/>
</dbReference>
<dbReference type="SMR" id="Q5HZZ6"/>
<dbReference type="DNASU" id="496309"/>
<dbReference type="GeneID" id="496309"/>
<dbReference type="KEGG" id="xla:496309"/>
<dbReference type="AGR" id="Xenbase:XB-GENE-963504"/>
<dbReference type="CTD" id="496309"/>
<dbReference type="Xenbase" id="XB-GENE-963504">
    <property type="gene designation" value="med8.L"/>
</dbReference>
<dbReference type="OrthoDB" id="150687at2759"/>
<dbReference type="UniPathway" id="UPA00143"/>
<dbReference type="Proteomes" id="UP000186698">
    <property type="component" value="Chromosome 4L"/>
</dbReference>
<dbReference type="Bgee" id="496309">
    <property type="expression patterns" value="Expressed in egg cell and 19 other cell types or tissues"/>
</dbReference>
<dbReference type="GO" id="GO:0070847">
    <property type="term" value="C:core mediator complex"/>
    <property type="evidence" value="ECO:0000318"/>
    <property type="project" value="GO_Central"/>
</dbReference>
<dbReference type="GO" id="GO:0016592">
    <property type="term" value="C:mediator complex"/>
    <property type="evidence" value="ECO:0000318"/>
    <property type="project" value="GO_Central"/>
</dbReference>
<dbReference type="GO" id="GO:0000978">
    <property type="term" value="F:RNA polymerase II cis-regulatory region sequence-specific DNA binding"/>
    <property type="evidence" value="ECO:0000318"/>
    <property type="project" value="GO_Central"/>
</dbReference>
<dbReference type="GO" id="GO:0003712">
    <property type="term" value="F:transcription coregulator activity"/>
    <property type="evidence" value="ECO:0000318"/>
    <property type="project" value="GO_Central"/>
</dbReference>
<dbReference type="GO" id="GO:0016567">
    <property type="term" value="P:protein ubiquitination"/>
    <property type="evidence" value="ECO:0007669"/>
    <property type="project" value="UniProtKB-UniPathway"/>
</dbReference>
<dbReference type="GO" id="GO:0006357">
    <property type="term" value="P:regulation of transcription by RNA polymerase II"/>
    <property type="evidence" value="ECO:0000318"/>
    <property type="project" value="GO_Central"/>
</dbReference>
<dbReference type="InterPro" id="IPR019364">
    <property type="entry name" value="Mediatior_Med8_fun/met"/>
</dbReference>
<dbReference type="PANTHER" id="PTHR13074">
    <property type="entry name" value="MEDIATOR OF RNA POLYMERASE II TRANSCRIPTION SUBUNIT 8"/>
    <property type="match status" value="1"/>
</dbReference>
<dbReference type="PANTHER" id="PTHR13074:SF9">
    <property type="entry name" value="MEDIATOR OF RNA POLYMERASE II TRANSCRIPTION SUBUNIT 8"/>
    <property type="match status" value="1"/>
</dbReference>
<dbReference type="Pfam" id="PF10232">
    <property type="entry name" value="Med8"/>
    <property type="match status" value="1"/>
</dbReference>
<name>MED8A_XENLA</name>
<accession>Q5HZZ6</accession>
<sequence length="268" mass="29535">MQREEKQLEACLDALISQVSDIKNSLVGFIHKLENEFDRLTWPSVLDSFALLSGQLNTLNKVLKNEKTPLLRNQVIIPLLLSPDRDEEIMRLTEGRVPVFSHEVVPDHLRTKPDPDVEELEKQLSAEAARITTEAAQKQVQSMNKMCSNLLDKISKEERESELGSLRQNKQTFNPTDTNALVAAVAFGKGLSNRRPPGQGGPMAPGQTGASGMLPSAAGMQQVPMSLQSNQQQQHMAGVSMSQGNQPGKMPSSIKTNIKSASMHPYQR</sequence>
<gene>
    <name type="primary">med8-a</name>
</gene>
<organism>
    <name type="scientific">Xenopus laevis</name>
    <name type="common">African clawed frog</name>
    <dbReference type="NCBI Taxonomy" id="8355"/>
    <lineage>
        <taxon>Eukaryota</taxon>
        <taxon>Metazoa</taxon>
        <taxon>Chordata</taxon>
        <taxon>Craniata</taxon>
        <taxon>Vertebrata</taxon>
        <taxon>Euteleostomi</taxon>
        <taxon>Amphibia</taxon>
        <taxon>Batrachia</taxon>
        <taxon>Anura</taxon>
        <taxon>Pipoidea</taxon>
        <taxon>Pipidae</taxon>
        <taxon>Xenopodinae</taxon>
        <taxon>Xenopus</taxon>
        <taxon>Xenopus</taxon>
    </lineage>
</organism>
<protein>
    <recommendedName>
        <fullName>Mediator of RNA polymerase II transcription subunit 8-A</fullName>
    </recommendedName>
    <alternativeName>
        <fullName>Mediator complex subunit 8-A</fullName>
    </alternativeName>
</protein>
<reference key="1">
    <citation type="submission" date="2005-01" db="EMBL/GenBank/DDBJ databases">
        <authorList>
            <consortium name="NIH - Xenopus Gene Collection (XGC) project"/>
        </authorList>
    </citation>
    <scope>NUCLEOTIDE SEQUENCE [LARGE SCALE MRNA]</scope>
    <source>
        <tissue>Egg</tissue>
    </source>
</reference>